<name>PGTA_RAT</name>
<accession>Q08602</accession>
<dbReference type="EC" id="2.5.1.60"/>
<dbReference type="EMBL" id="L10415">
    <property type="protein sequence ID" value="AAA41998.1"/>
    <property type="molecule type" value="mRNA"/>
</dbReference>
<dbReference type="EMBL" id="S62096">
    <property type="protein sequence ID" value="AAB27018.1"/>
    <property type="molecule type" value="mRNA"/>
</dbReference>
<dbReference type="EMBL" id="BC086547">
    <property type="protein sequence ID" value="AAH86547.1"/>
    <property type="molecule type" value="mRNA"/>
</dbReference>
<dbReference type="PIR" id="A45977">
    <property type="entry name" value="A45977"/>
</dbReference>
<dbReference type="RefSeq" id="NP_113842.1">
    <property type="nucleotide sequence ID" value="NM_031654.2"/>
</dbReference>
<dbReference type="RefSeq" id="XP_006252071.1">
    <property type="nucleotide sequence ID" value="XM_006252009.5"/>
</dbReference>
<dbReference type="RefSeq" id="XP_006252072.1">
    <property type="nucleotide sequence ID" value="XM_006252010.5"/>
</dbReference>
<dbReference type="PDB" id="1DCE">
    <property type="method" value="X-ray"/>
    <property type="resolution" value="2.00 A"/>
    <property type="chains" value="A/C=1-567"/>
</dbReference>
<dbReference type="PDB" id="1LTX">
    <property type="method" value="X-ray"/>
    <property type="resolution" value="2.70 A"/>
    <property type="chains" value="A=1-567"/>
</dbReference>
<dbReference type="PDB" id="3C72">
    <property type="method" value="X-ray"/>
    <property type="resolution" value="2.30 A"/>
    <property type="chains" value="A=1-236, A=353-441"/>
</dbReference>
<dbReference type="PDB" id="3DSS">
    <property type="method" value="X-ray"/>
    <property type="resolution" value="1.80 A"/>
    <property type="chains" value="A=1-237, A=353-441"/>
</dbReference>
<dbReference type="PDB" id="3DST">
    <property type="method" value="X-ray"/>
    <property type="resolution" value="1.90 A"/>
    <property type="chains" value="A=1-237, A=353-441"/>
</dbReference>
<dbReference type="PDB" id="3DSU">
    <property type="method" value="X-ray"/>
    <property type="resolution" value="1.90 A"/>
    <property type="chains" value="A=1-237, A=353-441"/>
</dbReference>
<dbReference type="PDB" id="3DSV">
    <property type="method" value="X-ray"/>
    <property type="resolution" value="2.10 A"/>
    <property type="chains" value="A=1-237, A=353-441"/>
</dbReference>
<dbReference type="PDB" id="3DSW">
    <property type="method" value="X-ray"/>
    <property type="resolution" value="2.15 A"/>
    <property type="chains" value="A=1-237, A=353-441"/>
</dbReference>
<dbReference type="PDB" id="3DSX">
    <property type="method" value="X-ray"/>
    <property type="resolution" value="2.10 A"/>
    <property type="chains" value="A=1-237, A=353-441"/>
</dbReference>
<dbReference type="PDB" id="3HXB">
    <property type="method" value="X-ray"/>
    <property type="resolution" value="2.25 A"/>
    <property type="chains" value="A=1-237, A=353-441"/>
</dbReference>
<dbReference type="PDB" id="3HXC">
    <property type="method" value="X-ray"/>
    <property type="resolution" value="1.95 A"/>
    <property type="chains" value="A=1-237, A=353-441"/>
</dbReference>
<dbReference type="PDB" id="3HXD">
    <property type="method" value="X-ray"/>
    <property type="resolution" value="1.95 A"/>
    <property type="chains" value="A=1-237, A=353-441"/>
</dbReference>
<dbReference type="PDB" id="3HXE">
    <property type="method" value="X-ray"/>
    <property type="resolution" value="1.95 A"/>
    <property type="chains" value="A=1-237, A=353-441"/>
</dbReference>
<dbReference type="PDB" id="3HXF">
    <property type="method" value="X-ray"/>
    <property type="resolution" value="1.90 A"/>
    <property type="chains" value="A=1-237, A=353-441"/>
</dbReference>
<dbReference type="PDB" id="3PZ1">
    <property type="method" value="X-ray"/>
    <property type="resolution" value="1.95 A"/>
    <property type="chains" value="A=1-237, A=353-441"/>
</dbReference>
<dbReference type="PDB" id="3PZ2">
    <property type="method" value="X-ray"/>
    <property type="resolution" value="2.35 A"/>
    <property type="chains" value="A=1-237, A=353-441"/>
</dbReference>
<dbReference type="PDB" id="3PZ3">
    <property type="method" value="X-ray"/>
    <property type="resolution" value="2.00 A"/>
    <property type="chains" value="A=1-237, A=353-441"/>
</dbReference>
<dbReference type="PDB" id="4EHM">
    <property type="method" value="X-ray"/>
    <property type="resolution" value="2.20 A"/>
    <property type="chains" value="A=1-237, A=353-441"/>
</dbReference>
<dbReference type="PDB" id="4GTS">
    <property type="method" value="X-ray"/>
    <property type="resolution" value="2.45 A"/>
    <property type="chains" value="A=1-237, A=353-441"/>
</dbReference>
<dbReference type="PDB" id="4GTT">
    <property type="method" value="X-ray"/>
    <property type="resolution" value="2.05 A"/>
    <property type="chains" value="A=1-237, A=353-441"/>
</dbReference>
<dbReference type="PDB" id="4GTV">
    <property type="method" value="X-ray"/>
    <property type="resolution" value="1.95 A"/>
    <property type="chains" value="A=1-237, A=353-441"/>
</dbReference>
<dbReference type="PDBsum" id="1DCE"/>
<dbReference type="PDBsum" id="1LTX"/>
<dbReference type="PDBsum" id="3C72"/>
<dbReference type="PDBsum" id="3DSS"/>
<dbReference type="PDBsum" id="3DST"/>
<dbReference type="PDBsum" id="3DSU"/>
<dbReference type="PDBsum" id="3DSV"/>
<dbReference type="PDBsum" id="3DSW"/>
<dbReference type="PDBsum" id="3DSX"/>
<dbReference type="PDBsum" id="3HXB"/>
<dbReference type="PDBsum" id="3HXC"/>
<dbReference type="PDBsum" id="3HXD"/>
<dbReference type="PDBsum" id="3HXE"/>
<dbReference type="PDBsum" id="3HXF"/>
<dbReference type="PDBsum" id="3PZ1"/>
<dbReference type="PDBsum" id="3PZ2"/>
<dbReference type="PDBsum" id="3PZ3"/>
<dbReference type="PDBsum" id="4EHM"/>
<dbReference type="PDBsum" id="4GTS"/>
<dbReference type="PDBsum" id="4GTT"/>
<dbReference type="PDBsum" id="4GTV"/>
<dbReference type="SMR" id="Q08602"/>
<dbReference type="BioGRID" id="248714">
    <property type="interactions" value="3"/>
</dbReference>
<dbReference type="ComplexPortal" id="CPX-2249">
    <property type="entry name" value="Protein geranylgeranyltransferase type II complex"/>
</dbReference>
<dbReference type="DIP" id="DIP-6137N"/>
<dbReference type="FunCoup" id="Q08602">
    <property type="interactions" value="2350"/>
</dbReference>
<dbReference type="IntAct" id="Q08602">
    <property type="interactions" value="1"/>
</dbReference>
<dbReference type="STRING" id="10116.ENSRNOP00000049261"/>
<dbReference type="BindingDB" id="Q08602"/>
<dbReference type="ChEMBL" id="CHEMBL4523995"/>
<dbReference type="PhosphoSitePlus" id="Q08602"/>
<dbReference type="jPOST" id="Q08602"/>
<dbReference type="PaxDb" id="10116-ENSRNOP00000049261"/>
<dbReference type="GeneID" id="58983"/>
<dbReference type="KEGG" id="rno:58983"/>
<dbReference type="UCSC" id="RGD:621697">
    <property type="organism name" value="rat"/>
</dbReference>
<dbReference type="AGR" id="RGD:621697"/>
<dbReference type="CTD" id="5875"/>
<dbReference type="RGD" id="621697">
    <property type="gene designation" value="Rabggta"/>
</dbReference>
<dbReference type="VEuPathDB" id="HostDB:ENSRNOG00000030483"/>
<dbReference type="eggNOG" id="KOG0529">
    <property type="taxonomic scope" value="Eukaryota"/>
</dbReference>
<dbReference type="HOGENOM" id="CLU_031996_3_2_1"/>
<dbReference type="InParanoid" id="Q08602"/>
<dbReference type="OrthoDB" id="25926at9989"/>
<dbReference type="PhylomeDB" id="Q08602"/>
<dbReference type="TreeFam" id="TF315057"/>
<dbReference type="Reactome" id="R-RNO-6803205">
    <property type="pathway name" value="TP53 regulates transcription of several additional cell death genes whose specific roles in p53-dependent apoptosis remain uncertain"/>
</dbReference>
<dbReference type="Reactome" id="R-RNO-8873719">
    <property type="pathway name" value="RAB geranylgeranylation"/>
</dbReference>
<dbReference type="EvolutionaryTrace" id="Q08602"/>
<dbReference type="PRO" id="PR:Q08602"/>
<dbReference type="Proteomes" id="UP000002494">
    <property type="component" value="Chromosome 15"/>
</dbReference>
<dbReference type="Bgee" id="ENSRNOG00000030483">
    <property type="expression patterns" value="Expressed in skeletal muscle tissue and 20 other cell types or tissues"/>
</dbReference>
<dbReference type="GO" id="GO:0005737">
    <property type="term" value="C:cytoplasm"/>
    <property type="evidence" value="ECO:0000318"/>
    <property type="project" value="GO_Central"/>
</dbReference>
<dbReference type="GO" id="GO:0005968">
    <property type="term" value="C:Rab-protein geranylgeranyltransferase complex"/>
    <property type="evidence" value="ECO:0000314"/>
    <property type="project" value="UniProtKB"/>
</dbReference>
<dbReference type="GO" id="GO:0004663">
    <property type="term" value="F:Rab geranylgeranyltransferase activity"/>
    <property type="evidence" value="ECO:0000314"/>
    <property type="project" value="UniProtKB"/>
</dbReference>
<dbReference type="GO" id="GO:0031267">
    <property type="term" value="F:small GTPase binding"/>
    <property type="evidence" value="ECO:0000314"/>
    <property type="project" value="UniProtKB"/>
</dbReference>
<dbReference type="GO" id="GO:0008270">
    <property type="term" value="F:zinc ion binding"/>
    <property type="evidence" value="ECO:0007669"/>
    <property type="project" value="InterPro"/>
</dbReference>
<dbReference type="GO" id="GO:0006888">
    <property type="term" value="P:endoplasmic reticulum to Golgi vesicle-mediated transport"/>
    <property type="evidence" value="ECO:0000318"/>
    <property type="project" value="GO_Central"/>
</dbReference>
<dbReference type="GO" id="GO:0018344">
    <property type="term" value="P:protein geranylgeranylation"/>
    <property type="evidence" value="ECO:0000314"/>
    <property type="project" value="UniProtKB"/>
</dbReference>
<dbReference type="FunFam" id="1.25.40.120:FF:000035">
    <property type="entry name" value="Geranylgeranyl transferase type-2 subunit alpha"/>
    <property type="match status" value="2"/>
</dbReference>
<dbReference type="FunFam" id="2.60.40.1130:FF:000001">
    <property type="entry name" value="Geranylgeranyl transferase type-2 subunit alpha"/>
    <property type="match status" value="1"/>
</dbReference>
<dbReference type="FunFam" id="3.80.10.10:FF:000138">
    <property type="entry name" value="geranylgeranyl transferase type-2 subunit alpha"/>
    <property type="match status" value="1"/>
</dbReference>
<dbReference type="Gene3D" id="1.25.40.120">
    <property type="entry name" value="Protein prenylyltransferase"/>
    <property type="match status" value="1"/>
</dbReference>
<dbReference type="Gene3D" id="2.60.40.1130">
    <property type="entry name" value="Rab geranylgeranyltransferase alpha-subunit, insert domain"/>
    <property type="match status" value="1"/>
</dbReference>
<dbReference type="Gene3D" id="3.80.10.10">
    <property type="entry name" value="Ribonuclease Inhibitor"/>
    <property type="match status" value="1"/>
</dbReference>
<dbReference type="InterPro" id="IPR032675">
    <property type="entry name" value="LRR_dom_sf"/>
</dbReference>
<dbReference type="InterPro" id="IPR002088">
    <property type="entry name" value="Prenyl_trans_a"/>
</dbReference>
<dbReference type="InterPro" id="IPR036254">
    <property type="entry name" value="RabGGT_asu_insert-dom_sf"/>
</dbReference>
<dbReference type="InterPro" id="IPR009087">
    <property type="entry name" value="RabGGT_asu_insert-domain"/>
</dbReference>
<dbReference type="PANTHER" id="PTHR11129:SF2">
    <property type="entry name" value="GERANYLGERANYL TRANSFERASE TYPE-2 SUBUNIT ALPHA"/>
    <property type="match status" value="1"/>
</dbReference>
<dbReference type="PANTHER" id="PTHR11129">
    <property type="entry name" value="PROTEIN FARNESYLTRANSFERASE ALPHA SUBUNIT/RAB GERANYLGERANYL TRANSFERASE ALPHA SUBUNIT"/>
    <property type="match status" value="1"/>
</dbReference>
<dbReference type="Pfam" id="PF01239">
    <property type="entry name" value="PPTA"/>
    <property type="match status" value="5"/>
</dbReference>
<dbReference type="Pfam" id="PF07711">
    <property type="entry name" value="RabGGT_insert"/>
    <property type="match status" value="1"/>
</dbReference>
<dbReference type="SUPFAM" id="SSF52058">
    <property type="entry name" value="L domain-like"/>
    <property type="match status" value="1"/>
</dbReference>
<dbReference type="SUPFAM" id="SSF48439">
    <property type="entry name" value="Protein prenylyltransferase"/>
    <property type="match status" value="1"/>
</dbReference>
<dbReference type="SUPFAM" id="SSF49594">
    <property type="entry name" value="Rab geranylgeranyltransferase alpha-subunit, insert domain"/>
    <property type="match status" value="1"/>
</dbReference>
<dbReference type="PROSITE" id="PS51147">
    <property type="entry name" value="PFTA"/>
    <property type="match status" value="6"/>
</dbReference>
<proteinExistence type="evidence at protein level"/>
<comment type="function">
    <text evidence="6 7 8 9 10 11">Catalyzes the transfer of a geranylgeranyl moiety from geranylgeranyl diphosphate to both cysteines of Rab proteins with the C-terminal sequence -XXCC, -XCXC and -CCXX, such as RAB1A, RAB3A, RAB5A and RAB7A.</text>
</comment>
<comment type="catalytic activity">
    <reaction evidence="7 8 9 10">
        <text>geranylgeranyl diphosphate + L-cysteinyl-[protein] = S-geranylgeranyl-L-cysteinyl-[protein] + diphosphate</text>
        <dbReference type="Rhea" id="RHEA:21240"/>
        <dbReference type="Rhea" id="RHEA-COMP:10131"/>
        <dbReference type="Rhea" id="RHEA-COMP:11537"/>
        <dbReference type="ChEBI" id="CHEBI:29950"/>
        <dbReference type="ChEBI" id="CHEBI:33019"/>
        <dbReference type="ChEBI" id="CHEBI:57533"/>
        <dbReference type="ChEBI" id="CHEBI:86021"/>
        <dbReference type="EC" id="2.5.1.60"/>
    </reaction>
</comment>
<comment type="activity regulation">
    <text>The enzymatic reaction requires the aid of a Rab escort protein (also called component A), such as CHM.</text>
</comment>
<comment type="subunit">
    <text evidence="1 3 4 5 6 7 8 9 10 11">Heterotrimer composed of RABGGTA, RABGGTB and CHM; within this trimer, RABGGTA and RABGGTB form the catalytic component B, while CHM (component A) mediates peptide substrate binding (PubMed:10745007, PubMed:11675392, PubMed:12620235, PubMed:18399557, PubMed:18756270, PubMed:19894725, PubMed:21520375, PubMed:22963166, PubMed:8505342). The Rab GGTase dimer (RGGT) interacts with CHM (component A) prior to Rab protein binding; the association is stabilized by geranylgeranyl pyrophosphate (GGpp) (PubMed:12620235). The CHM:RGGT:Rab complex is destabilized by GGpp (PubMed:12620235). Interacts with non-phosphorylated form of RAB8A; phosphorylation of RAB8A at 'Thr-72' disrupts this interaction (By similarity).</text>
</comment>
<comment type="tissue specificity">
    <text>Most abundant in the heart, brain, spleen and liver. Less in the lung, muscle, kidney and testis; in these tissues less abundant than the beta subunit.</text>
</comment>
<comment type="similarity">
    <text evidence="12">Belongs to the protein prenyltransferase subunit alpha family.</text>
</comment>
<evidence type="ECO:0000250" key="1">
    <source>
        <dbReference type="UniProtKB" id="Q92696"/>
    </source>
</evidence>
<evidence type="ECO:0000250" key="2">
    <source>
        <dbReference type="UniProtKB" id="Q9JHK4"/>
    </source>
</evidence>
<evidence type="ECO:0000269" key="3">
    <source>
    </source>
</evidence>
<evidence type="ECO:0000269" key="4">
    <source>
    </source>
</evidence>
<evidence type="ECO:0000269" key="5">
    <source>
    </source>
</evidence>
<evidence type="ECO:0000269" key="6">
    <source>
    </source>
</evidence>
<evidence type="ECO:0000269" key="7">
    <source>
    </source>
</evidence>
<evidence type="ECO:0000269" key="8">
    <source>
    </source>
</evidence>
<evidence type="ECO:0000269" key="9">
    <source>
    </source>
</evidence>
<evidence type="ECO:0000269" key="10">
    <source>
    </source>
</evidence>
<evidence type="ECO:0000269" key="11">
    <source>
    </source>
</evidence>
<evidence type="ECO:0000305" key="12"/>
<evidence type="ECO:0007829" key="13">
    <source>
        <dbReference type="PDB" id="1DCE"/>
    </source>
</evidence>
<evidence type="ECO:0007829" key="14">
    <source>
        <dbReference type="PDB" id="1LTX"/>
    </source>
</evidence>
<evidence type="ECO:0007829" key="15">
    <source>
        <dbReference type="PDB" id="3C72"/>
    </source>
</evidence>
<evidence type="ECO:0007829" key="16">
    <source>
        <dbReference type="PDB" id="3DSS"/>
    </source>
</evidence>
<sequence>MHGRLKVKTSEEQAEAKRLEREQKLKLYQSATQAVFQKRQAGELDESVLELTSQILGANPDFATLWNCRREVLQHLETEKSPEESAALVKAELGFLESCLRVNPKSYGTWHHRCWLLSRLPEPNWARELELCARFLEADERNFHCWDYRRFVAAQAAVAPAEELAFTDSLITRNFSNYSSWHYRSCLLPQLHPQPDSGPQGRLPENVLLKELELVQNAFFTDPNDQSAWFYHRWLLGRAEPHDVLCCVHVSREEACLSVCFSRPLTVGSRMGTLLLMVDEAPLSVEWRTPDGRNRPSHVWLCDLPAASLNDQLPQHTFRVIWTGSDSQKECVLLKDRPECWCRDSATDEQLFRCELSVEKSTVLQSELESCKELQELEPENKWCLLTIILLMRALDPLLYEKETLQYFSTLKAVDPMRAAYLDDLRSKFLLENSVLKMEYADVRVLHLAHKDLTVLCHLEQLLLVTHLDLSHNRLRALPPALAALRCLEVLQASDNALENVDGVANLPRLQELLLCNNRLQQSAAIQPLVSCPRLVLLNLQGNSLCQEEGIQERLAEMLPSVSSILT</sequence>
<organism>
    <name type="scientific">Rattus norvegicus</name>
    <name type="common">Rat</name>
    <dbReference type="NCBI Taxonomy" id="10116"/>
    <lineage>
        <taxon>Eukaryota</taxon>
        <taxon>Metazoa</taxon>
        <taxon>Chordata</taxon>
        <taxon>Craniata</taxon>
        <taxon>Vertebrata</taxon>
        <taxon>Euteleostomi</taxon>
        <taxon>Mammalia</taxon>
        <taxon>Eutheria</taxon>
        <taxon>Euarchontoglires</taxon>
        <taxon>Glires</taxon>
        <taxon>Rodentia</taxon>
        <taxon>Myomorpha</taxon>
        <taxon>Muroidea</taxon>
        <taxon>Muridae</taxon>
        <taxon>Murinae</taxon>
        <taxon>Rattus</taxon>
    </lineage>
</organism>
<reference key="1">
    <citation type="journal article" date="1993" name="J. Biol. Chem.">
        <title>cDNA cloning and expression of the alpha and beta subunits of rat Rab geranylgeranyl transferase.</title>
        <authorList>
            <person name="Armstrong S.A."/>
            <person name="Seabra M.C."/>
            <person name="Suedhof T.C."/>
            <person name="Goldstein J.L."/>
            <person name="Brown M.S."/>
        </authorList>
    </citation>
    <scope>NUCLEOTIDE SEQUENCE [MRNA]</scope>
    <scope>PARTIAL PROTEIN SEQUENCE</scope>
    <scope>FUNCTION</scope>
    <scope>SUBUNIT</scope>
    <source>
        <tissue>Brain</tissue>
    </source>
</reference>
<reference key="2">
    <citation type="journal article" date="2004" name="Genome Res.">
        <title>The status, quality, and expansion of the NIH full-length cDNA project: the Mammalian Gene Collection (MGC).</title>
        <authorList>
            <consortium name="The MGC Project Team"/>
        </authorList>
    </citation>
    <scope>NUCLEOTIDE SEQUENCE [LARGE SCALE MRNA]</scope>
    <source>
        <tissue>Ovary</tissue>
    </source>
</reference>
<reference key="3">
    <citation type="journal article" date="2001" name="J. Biol. Chem.">
        <title>Phosphoisoprenoids modulate association of Rab geranylgeranyltransferase with REP-1.</title>
        <authorList>
            <person name="Thoma N.H."/>
            <person name="Iakovenko A."/>
            <person name="Goody R.S."/>
            <person name="Alexandrov K."/>
        </authorList>
    </citation>
    <scope>SUBUNIT</scope>
</reference>
<reference key="4">
    <citation type="journal article" date="2000" name="Structure">
        <title>Crystal structure of Rab geranylgeranyltransferase at 2.0 A resolution.</title>
        <authorList>
            <person name="Zhang H."/>
            <person name="Seabra M.C."/>
            <person name="Deisenhofer J."/>
        </authorList>
    </citation>
    <scope>X-RAY CRYSTALLOGRAPHY (2.0 ANGSTROMS) IN COMPLEX WITH RABGGTB</scope>
    <scope>SUBUNIT</scope>
</reference>
<reference key="5">
    <citation type="journal article" date="2003" name="Mol. Cell">
        <title>Structure of Rab escort protein-1 in complex with Rab geranylgeranyltransferase.</title>
        <authorList>
            <person name="Pylypenko O."/>
            <person name="Rak A."/>
            <person name="Reents R."/>
            <person name="Niculae A."/>
            <person name="Sidorovitch V."/>
            <person name="Cioaca M.D."/>
            <person name="Bessolitsyna E."/>
            <person name="Thomae N.H."/>
            <person name="Waldmann H."/>
            <person name="Schlichting I."/>
            <person name="Goody R.S."/>
            <person name="Alexandrov K."/>
        </authorList>
    </citation>
    <scope>X-RAY CRYSTALLOGRAPHY (2.7 ANGSTROMS) IN COMPLEX WITH GERANYGERANYL PHOSPHATE ANALOG; RABGGTB AND CHM/REP1</scope>
    <scope>SUBUNIT</scope>
</reference>
<reference key="6">
    <citation type="journal article" date="2008" name="Angew. Chem. Int. Ed. Engl.">
        <title>Development of selective RabGGTase inhibitors and crystal structure of a RabGGTase-inhibitor complex.</title>
        <authorList>
            <person name="Guo Z."/>
            <person name="Wu Y.W."/>
            <person name="Tan K.T."/>
            <person name="Bon R.S."/>
            <person name="Guiu-Rozas E."/>
            <person name="Delon C."/>
            <person name="Nguyen T.U."/>
            <person name="Wetzel S."/>
            <person name="Arndt S."/>
            <person name="Goody R.S."/>
            <person name="Blankenfeldt W."/>
            <person name="Alexandrov K."/>
            <person name="Waldmann H."/>
        </authorList>
    </citation>
    <scope>X-RAY CRYSTALLOGRAPHY (2.30 ANGSTROMS) OF 1-441 IN COMPLEX WITH INHIBITOR</scope>
    <scope>FUNCTION</scope>
    <scope>SUBUNIT</scope>
</reference>
<reference key="7">
    <citation type="journal article" date="2008" name="EMBO J.">
        <title>Structures of RabGGTase-substrate/product complexes provide insights into the evolution of protein prenylation.</title>
        <authorList>
            <person name="Guo Z."/>
            <person name="Wu Y.W."/>
            <person name="Das D."/>
            <person name="Delon C."/>
            <person name="Cramer J."/>
            <person name="Yu S."/>
            <person name="Thuns S."/>
            <person name="Lupilova N."/>
            <person name="Waldmann H."/>
            <person name="Brunsveld L."/>
            <person name="Goody R.S."/>
            <person name="Alexandrov K."/>
            <person name="Blankenfeldt W."/>
        </authorList>
    </citation>
    <scope>X-RAY CRYSTALLOGRAPHY (1.80 ANGSTROMS) OF 1-441</scope>
    <scope>FUNCTION</scope>
    <scope>CATALYTIC ACTIVITY</scope>
    <scope>SUBUNIT</scope>
</reference>
<reference key="8">
    <citation type="journal article" date="2009" name="J. Med. Chem.">
        <title>Design, synthesis, and characterization of peptide-based rab geranylgeranyl transferase inhibitors.</title>
        <authorList>
            <person name="Tan K.T."/>
            <person name="Guiu-Rozas E."/>
            <person name="Bon R.S."/>
            <person name="Guo Z."/>
            <person name="Delon C."/>
            <person name="Wetzel S."/>
            <person name="Arndt S."/>
            <person name="Alexandrov K."/>
            <person name="Waldmann H."/>
            <person name="Goody R.S."/>
            <person name="Wu Y.W."/>
            <person name="Blankenfeldt W."/>
        </authorList>
    </citation>
    <scope>X-RAY CRYSTALLOGRAPHY (1.90 ANGSTROMS) OF 1-441</scope>
    <scope>FUNCTION</scope>
    <scope>CATALYTIC ACTIVITY</scope>
    <scope>SUBUNIT</scope>
</reference>
<reference key="9">
    <citation type="journal article" date="2011" name="Angew. Chem. Int. Ed. Engl.">
        <title>Structure-guided development of selective RabGGTase inhibitors.</title>
        <authorList>
            <person name="Bon R.S."/>
            <person name="Guo Z."/>
            <person name="Stigter E.A."/>
            <person name="Wetzel S."/>
            <person name="Menninger S."/>
            <person name="Wolf A."/>
            <person name="Choidas A."/>
            <person name="Alexandrov K."/>
            <person name="Blankenfeldt W."/>
            <person name="Goody R.S."/>
            <person name="Waldmann H."/>
        </authorList>
    </citation>
    <scope>X-RAY CRYSTALLOGRAPHY (1.95 ANGSTROMS) OF 1-441</scope>
    <scope>FUNCTION</scope>
    <scope>CATALYTIC ACTIVITY</scope>
    <scope>SUBUNIT</scope>
</reference>
<reference key="10">
    <citation type="journal article" date="2012" name="J. Med. Chem.">
        <title>Development of selective, potent RabGGTase inhibitors.</title>
        <authorList>
            <person name="Stigter E.A."/>
            <person name="Guo Z."/>
            <person name="Bon R.S."/>
            <person name="Wu Y.W."/>
            <person name="Choidas A."/>
            <person name="Wolf A."/>
            <person name="Menninger S."/>
            <person name="Waldmann H."/>
            <person name="Blankenfeldt W."/>
            <person name="Goody R.S."/>
        </authorList>
    </citation>
    <scope>X-RAY CRYSTALLOGRAPHY (1.95 ANGSTROMS) OF 1-441</scope>
    <scope>FUNCTION</scope>
    <scope>CATALYTIC ACTIVITY</scope>
    <scope>SUBUNIT</scope>
</reference>
<feature type="chain" id="PRO_0000119759" description="Geranylgeranyl transferase type-2 subunit alpha">
    <location>
        <begin position="1"/>
        <end position="567"/>
    </location>
</feature>
<feature type="repeat" description="PFTA 1">
    <location>
        <begin position="44"/>
        <end position="78"/>
    </location>
</feature>
<feature type="repeat" description="PFTA 2">
    <location>
        <begin position="88"/>
        <end position="122"/>
    </location>
</feature>
<feature type="repeat" description="PFTA 3">
    <location>
        <begin position="124"/>
        <end position="158"/>
    </location>
</feature>
<feature type="repeat" description="PFTA 4">
    <location>
        <begin position="159"/>
        <end position="193"/>
    </location>
</feature>
<feature type="repeat" description="PFTA 5">
    <location>
        <begin position="207"/>
        <end position="241"/>
    </location>
</feature>
<feature type="repeat" description="PFTA 6">
    <location>
        <begin position="363"/>
        <end position="397"/>
    </location>
</feature>
<feature type="repeat" description="LRR 1">
    <location>
        <begin position="442"/>
        <end position="463"/>
    </location>
</feature>
<feature type="repeat" description="LRR 2">
    <location>
        <begin position="464"/>
        <end position="486"/>
    </location>
</feature>
<feature type="repeat" description="LRR 3">
    <location>
        <begin position="487"/>
        <end position="508"/>
    </location>
</feature>
<feature type="repeat" description="LRR 4">
    <location>
        <begin position="509"/>
        <end position="530"/>
    </location>
</feature>
<feature type="repeat" description="LRR 5">
    <location>
        <begin position="534"/>
        <end position="555"/>
    </location>
</feature>
<feature type="modified residue" description="Phosphoserine" evidence="2">
    <location>
        <position position="98"/>
    </location>
</feature>
<feature type="sequence conflict" description="In Ref. 1; AA sequence." evidence="12" ref="1">
    <original>S</original>
    <variation>D</variation>
    <location>
        <position position="169"/>
    </location>
</feature>
<feature type="sequence conflict" description="In Ref. 1; AA sequence." evidence="12" ref="1">
    <original>S</original>
    <variation>Q</variation>
    <location>
        <position position="227"/>
    </location>
</feature>
<feature type="helix" evidence="16">
    <location>
        <begin position="13"/>
        <end position="40"/>
    </location>
</feature>
<feature type="helix" evidence="16">
    <location>
        <begin position="46"/>
        <end position="56"/>
    </location>
</feature>
<feature type="helix" evidence="16">
    <location>
        <begin position="63"/>
        <end position="79"/>
    </location>
</feature>
<feature type="helix" evidence="16">
    <location>
        <begin position="82"/>
        <end position="102"/>
    </location>
</feature>
<feature type="helix" evidence="16">
    <location>
        <begin position="107"/>
        <end position="119"/>
    </location>
</feature>
<feature type="strand" evidence="15">
    <location>
        <begin position="120"/>
        <end position="122"/>
    </location>
</feature>
<feature type="helix" evidence="16">
    <location>
        <begin position="125"/>
        <end position="138"/>
    </location>
</feature>
<feature type="helix" evidence="16">
    <location>
        <begin position="143"/>
        <end position="155"/>
    </location>
</feature>
<feature type="helix" evidence="16">
    <location>
        <begin position="160"/>
        <end position="173"/>
    </location>
</feature>
<feature type="helix" evidence="16">
    <location>
        <begin position="178"/>
        <end position="191"/>
    </location>
</feature>
<feature type="strand" evidence="13">
    <location>
        <begin position="197"/>
        <end position="199"/>
    </location>
</feature>
<feature type="helix" evidence="16">
    <location>
        <begin position="205"/>
        <end position="221"/>
    </location>
</feature>
<feature type="helix" evidence="16">
    <location>
        <begin position="226"/>
        <end position="237"/>
    </location>
</feature>
<feature type="strand" evidence="13">
    <location>
        <begin position="245"/>
        <end position="251"/>
    </location>
</feature>
<feature type="turn" evidence="13">
    <location>
        <begin position="252"/>
        <end position="255"/>
    </location>
</feature>
<feature type="strand" evidence="13">
    <location>
        <begin position="256"/>
        <end position="265"/>
    </location>
</feature>
<feature type="strand" evidence="14">
    <location>
        <begin position="267"/>
        <end position="269"/>
    </location>
</feature>
<feature type="strand" evidence="13">
    <location>
        <begin position="274"/>
        <end position="283"/>
    </location>
</feature>
<feature type="strand" evidence="13">
    <location>
        <begin position="296"/>
        <end position="303"/>
    </location>
</feature>
<feature type="helix" evidence="13">
    <location>
        <begin position="306"/>
        <end position="308"/>
    </location>
</feature>
<feature type="strand" evidence="13">
    <location>
        <begin position="313"/>
        <end position="322"/>
    </location>
</feature>
<feature type="turn" evidence="13">
    <location>
        <begin position="323"/>
        <end position="326"/>
    </location>
</feature>
<feature type="strand" evidence="13">
    <location>
        <begin position="327"/>
        <end position="334"/>
    </location>
</feature>
<feature type="strand" evidence="13">
    <location>
        <begin position="338"/>
        <end position="343"/>
    </location>
</feature>
<feature type="turn" evidence="13">
    <location>
        <begin position="347"/>
        <end position="350"/>
    </location>
</feature>
<feature type="helix" evidence="16">
    <location>
        <begin position="353"/>
        <end position="355"/>
    </location>
</feature>
<feature type="helix" evidence="16">
    <location>
        <begin position="358"/>
        <end position="377"/>
    </location>
</feature>
<feature type="helix" evidence="16">
    <location>
        <begin position="382"/>
        <end position="395"/>
    </location>
</feature>
<feature type="turn" evidence="16">
    <location>
        <begin position="397"/>
        <end position="400"/>
    </location>
</feature>
<feature type="helix" evidence="16">
    <location>
        <begin position="401"/>
        <end position="414"/>
    </location>
</feature>
<feature type="helix" evidence="16">
    <location>
        <begin position="416"/>
        <end position="418"/>
    </location>
</feature>
<feature type="helix" evidence="16">
    <location>
        <begin position="419"/>
        <end position="438"/>
    </location>
</feature>
<feature type="strand" evidence="13">
    <location>
        <begin position="444"/>
        <end position="447"/>
    </location>
</feature>
<feature type="helix" evidence="13">
    <location>
        <begin position="459"/>
        <end position="462"/>
    </location>
</feature>
<feature type="strand" evidence="13">
    <location>
        <begin position="467"/>
        <end position="469"/>
    </location>
</feature>
<feature type="helix" evidence="13">
    <location>
        <begin position="480"/>
        <end position="484"/>
    </location>
</feature>
<feature type="strand" evidence="13">
    <location>
        <begin position="490"/>
        <end position="492"/>
    </location>
</feature>
<feature type="helix" evidence="13">
    <location>
        <begin position="502"/>
        <end position="504"/>
    </location>
</feature>
<feature type="strand" evidence="13">
    <location>
        <begin position="512"/>
        <end position="514"/>
    </location>
</feature>
<feature type="strand" evidence="13">
    <location>
        <begin position="522"/>
        <end position="524"/>
    </location>
</feature>
<feature type="helix" evidence="13">
    <location>
        <begin position="527"/>
        <end position="531"/>
    </location>
</feature>
<feature type="strand" evidence="13">
    <location>
        <begin position="537"/>
        <end position="539"/>
    </location>
</feature>
<feature type="helix" evidence="13">
    <location>
        <begin position="544"/>
        <end position="547"/>
    </location>
</feature>
<feature type="strand" evidence="13">
    <location>
        <begin position="548"/>
        <end position="550"/>
    </location>
</feature>
<feature type="helix" evidence="13">
    <location>
        <begin position="554"/>
        <end position="558"/>
    </location>
</feature>
<feature type="strand" evidence="13">
    <location>
        <begin position="563"/>
        <end position="566"/>
    </location>
</feature>
<protein>
    <recommendedName>
        <fullName>Geranylgeranyl transferase type-2 subunit alpha</fullName>
        <ecNumber>2.5.1.60</ecNumber>
    </recommendedName>
    <alternativeName>
        <fullName>Geranylgeranyl transferase type II subunit alpha</fullName>
    </alternativeName>
    <alternativeName>
        <fullName>Rab geranyl-geranyltransferase subunit alpha</fullName>
        <shortName>Rab GG transferase alpha</shortName>
        <shortName>Rab GGTase alpha</shortName>
    </alternativeName>
    <alternativeName>
        <fullName>Rab geranylgeranyltransferase subunit alpha</fullName>
    </alternativeName>
</protein>
<gene>
    <name type="primary">Rabggta</name>
    <name type="synonym">Ggta</name>
</gene>
<keyword id="KW-0002">3D-structure</keyword>
<keyword id="KW-0903">Direct protein sequencing</keyword>
<keyword id="KW-0433">Leucine-rich repeat</keyword>
<keyword id="KW-0597">Phosphoprotein</keyword>
<keyword id="KW-0637">Prenyltransferase</keyword>
<keyword id="KW-1185">Reference proteome</keyword>
<keyword id="KW-0677">Repeat</keyword>
<keyword id="KW-0808">Transferase</keyword>